<comment type="function">
    <text evidence="1">DNA-dependent RNA polymerase (RNAP) catalyzes the transcription of DNA into RNA using the four ribonucleoside triphosphates as substrates.</text>
</comment>
<comment type="catalytic activity">
    <reaction evidence="1">
        <text>RNA(n) + a ribonucleoside 5'-triphosphate = RNA(n+1) + diphosphate</text>
        <dbReference type="Rhea" id="RHEA:21248"/>
        <dbReference type="Rhea" id="RHEA-COMP:14527"/>
        <dbReference type="Rhea" id="RHEA-COMP:17342"/>
        <dbReference type="ChEBI" id="CHEBI:33019"/>
        <dbReference type="ChEBI" id="CHEBI:61557"/>
        <dbReference type="ChEBI" id="CHEBI:140395"/>
        <dbReference type="EC" id="2.7.7.6"/>
    </reaction>
</comment>
<comment type="cofactor">
    <cofactor evidence="1">
        <name>Zn(2+)</name>
        <dbReference type="ChEBI" id="CHEBI:29105"/>
    </cofactor>
    <text evidence="1">Binds 1 zinc ion.</text>
</comment>
<comment type="subunit">
    <text evidence="1">Part of the RNA polymerase complex.</text>
</comment>
<comment type="subcellular location">
    <subcellularLocation>
        <location evidence="1">Cytoplasm</location>
    </subcellularLocation>
</comment>
<comment type="similarity">
    <text evidence="1">Belongs to the archaeal Rpo12/eukaryotic RPC10 RNA polymerase subunit family.</text>
</comment>
<proteinExistence type="inferred from homology"/>
<reference key="1">
    <citation type="journal article" date="2008" name="J. Bacteriol.">
        <title>The complete genome sequence of Thermococcus onnurineus NA1 reveals a mixed heterotrophic and carboxydotrophic metabolism.</title>
        <authorList>
            <person name="Lee H.S."/>
            <person name="Kang S.G."/>
            <person name="Bae S.S."/>
            <person name="Lim J.K."/>
            <person name="Cho Y."/>
            <person name="Kim Y.J."/>
            <person name="Jeon J.H."/>
            <person name="Cha S.-S."/>
            <person name="Kwon K.K."/>
            <person name="Kim H.-T."/>
            <person name="Park C.-J."/>
            <person name="Lee H.-W."/>
            <person name="Kim S.I."/>
            <person name="Chun J."/>
            <person name="Colwell R.R."/>
            <person name="Kim S.-J."/>
            <person name="Lee J.-H."/>
        </authorList>
    </citation>
    <scope>NUCLEOTIDE SEQUENCE [LARGE SCALE GENOMIC DNA]</scope>
    <source>
        <strain>NA1</strain>
    </source>
</reference>
<organism>
    <name type="scientific">Thermococcus onnurineus (strain NA1)</name>
    <dbReference type="NCBI Taxonomy" id="523850"/>
    <lineage>
        <taxon>Archaea</taxon>
        <taxon>Methanobacteriati</taxon>
        <taxon>Methanobacteriota</taxon>
        <taxon>Thermococci</taxon>
        <taxon>Thermococcales</taxon>
        <taxon>Thermococcaceae</taxon>
        <taxon>Thermococcus</taxon>
    </lineage>
</organism>
<protein>
    <recommendedName>
        <fullName evidence="1">DNA-directed RNA polymerase subunit Rpo12</fullName>
        <ecNumber evidence="1">2.7.7.6</ecNumber>
    </recommendedName>
    <alternativeName>
        <fullName evidence="1">DNA-directed RNA polymerase subunit P</fullName>
    </alternativeName>
</protein>
<name>RPO12_THEON</name>
<feature type="chain" id="PRO_1000130409" description="DNA-directed RNA polymerase subunit Rpo12">
    <location>
        <begin position="1"/>
        <end position="49"/>
    </location>
</feature>
<feature type="binding site" evidence="1">
    <location>
        <position position="11"/>
    </location>
    <ligand>
        <name>Zn(2+)</name>
        <dbReference type="ChEBI" id="CHEBI:29105"/>
    </ligand>
</feature>
<feature type="binding site" evidence="1">
    <location>
        <position position="27"/>
    </location>
    <ligand>
        <name>Zn(2+)</name>
        <dbReference type="ChEBI" id="CHEBI:29105"/>
    </ligand>
</feature>
<feature type="binding site" evidence="1">
    <location>
        <position position="30"/>
    </location>
    <ligand>
        <name>Zn(2+)</name>
        <dbReference type="ChEBI" id="CHEBI:29105"/>
    </ligand>
</feature>
<sequence length="49" mass="5701">MVMAVYRCAKCGKEVELDLENTREVRCPYCGSKILYKPRPRVARRVKAI</sequence>
<gene>
    <name evidence="1" type="primary">rpo12</name>
    <name evidence="1" type="synonym">rpoP</name>
    <name type="ordered locus">TON_0454</name>
</gene>
<keyword id="KW-0963">Cytoplasm</keyword>
<keyword id="KW-0240">DNA-directed RNA polymerase</keyword>
<keyword id="KW-0479">Metal-binding</keyword>
<keyword id="KW-0548">Nucleotidyltransferase</keyword>
<keyword id="KW-0804">Transcription</keyword>
<keyword id="KW-0808">Transferase</keyword>
<keyword id="KW-0862">Zinc</keyword>
<accession>B6YTZ7</accession>
<dbReference type="EC" id="2.7.7.6" evidence="1"/>
<dbReference type="EMBL" id="CP000855">
    <property type="protein sequence ID" value="ACJ15939.1"/>
    <property type="molecule type" value="Genomic_DNA"/>
</dbReference>
<dbReference type="RefSeq" id="WP_012571411.1">
    <property type="nucleotide sequence ID" value="NC_011529.1"/>
</dbReference>
<dbReference type="SMR" id="B6YTZ7"/>
<dbReference type="STRING" id="523850.TON_0454"/>
<dbReference type="GeneID" id="74505615"/>
<dbReference type="KEGG" id="ton:TON_0454"/>
<dbReference type="PATRIC" id="fig|523850.10.peg.456"/>
<dbReference type="eggNOG" id="arCOG04341">
    <property type="taxonomic scope" value="Archaea"/>
</dbReference>
<dbReference type="HOGENOM" id="CLU_179456_2_1_2"/>
<dbReference type="OrthoDB" id="129238at2157"/>
<dbReference type="Proteomes" id="UP000002727">
    <property type="component" value="Chromosome"/>
</dbReference>
<dbReference type="GO" id="GO:0005737">
    <property type="term" value="C:cytoplasm"/>
    <property type="evidence" value="ECO:0007669"/>
    <property type="project" value="UniProtKB-SubCell"/>
</dbReference>
<dbReference type="GO" id="GO:0000428">
    <property type="term" value="C:DNA-directed RNA polymerase complex"/>
    <property type="evidence" value="ECO:0007669"/>
    <property type="project" value="UniProtKB-KW"/>
</dbReference>
<dbReference type="GO" id="GO:0003677">
    <property type="term" value="F:DNA binding"/>
    <property type="evidence" value="ECO:0007669"/>
    <property type="project" value="InterPro"/>
</dbReference>
<dbReference type="GO" id="GO:0003899">
    <property type="term" value="F:DNA-directed RNA polymerase activity"/>
    <property type="evidence" value="ECO:0007669"/>
    <property type="project" value="UniProtKB-UniRule"/>
</dbReference>
<dbReference type="GO" id="GO:0008270">
    <property type="term" value="F:zinc ion binding"/>
    <property type="evidence" value="ECO:0007669"/>
    <property type="project" value="UniProtKB-UniRule"/>
</dbReference>
<dbReference type="GO" id="GO:0006351">
    <property type="term" value="P:DNA-templated transcription"/>
    <property type="evidence" value="ECO:0007669"/>
    <property type="project" value="UniProtKB-UniRule"/>
</dbReference>
<dbReference type="Gene3D" id="2.20.28.30">
    <property type="entry name" value="RNA polymerase ii, chain L"/>
    <property type="match status" value="1"/>
</dbReference>
<dbReference type="HAMAP" id="MF_00615">
    <property type="entry name" value="RNApol_arch_Rpo12"/>
    <property type="match status" value="1"/>
</dbReference>
<dbReference type="InterPro" id="IPR006591">
    <property type="entry name" value="RNAP_P/RPABC4"/>
</dbReference>
<dbReference type="InterPro" id="IPR029040">
    <property type="entry name" value="RPABC4/Spt4"/>
</dbReference>
<dbReference type="InterPro" id="IPR023464">
    <property type="entry name" value="Rpo12"/>
</dbReference>
<dbReference type="NCBIfam" id="NF001607">
    <property type="entry name" value="PRK00398.1-4"/>
    <property type="match status" value="1"/>
</dbReference>
<dbReference type="Pfam" id="PF03604">
    <property type="entry name" value="Zn_ribbon_RPAB4"/>
    <property type="match status" value="1"/>
</dbReference>
<dbReference type="SMART" id="SM00659">
    <property type="entry name" value="RPOLCX"/>
    <property type="match status" value="1"/>
</dbReference>
<dbReference type="SUPFAM" id="SSF63393">
    <property type="entry name" value="RNA polymerase subunits"/>
    <property type="match status" value="1"/>
</dbReference>
<evidence type="ECO:0000255" key="1">
    <source>
        <dbReference type="HAMAP-Rule" id="MF_00615"/>
    </source>
</evidence>